<organism>
    <name type="scientific">Salmonella arizonae (strain ATCC BAA-731 / CDC346-86 / RSK2980)</name>
    <dbReference type="NCBI Taxonomy" id="41514"/>
    <lineage>
        <taxon>Bacteria</taxon>
        <taxon>Pseudomonadati</taxon>
        <taxon>Pseudomonadota</taxon>
        <taxon>Gammaproteobacteria</taxon>
        <taxon>Enterobacterales</taxon>
        <taxon>Enterobacteriaceae</taxon>
        <taxon>Salmonella</taxon>
    </lineage>
</organism>
<evidence type="ECO:0000255" key="1">
    <source>
        <dbReference type="HAMAP-Rule" id="MF_00030"/>
    </source>
</evidence>
<evidence type="ECO:0000255" key="2">
    <source>
        <dbReference type="PROSITE-ProRule" id="PRU01175"/>
    </source>
</evidence>
<protein>
    <recommendedName>
        <fullName evidence="1">Deoxyguanosinetriphosphate triphosphohydrolase</fullName>
        <shortName evidence="1">dGTP triphosphohydrolase</shortName>
        <shortName evidence="1">dGTPase</shortName>
        <ecNumber evidence="1">3.1.5.1</ecNumber>
    </recommendedName>
</protein>
<dbReference type="EC" id="3.1.5.1" evidence="1"/>
<dbReference type="EMBL" id="CP000880">
    <property type="protein sequence ID" value="ABX22644.1"/>
    <property type="molecule type" value="Genomic_DNA"/>
</dbReference>
<dbReference type="SMR" id="A9MPK1"/>
<dbReference type="STRING" id="41514.SARI_02796"/>
<dbReference type="KEGG" id="ses:SARI_02796"/>
<dbReference type="HOGENOM" id="CLU_028163_2_1_6"/>
<dbReference type="Proteomes" id="UP000002084">
    <property type="component" value="Chromosome"/>
</dbReference>
<dbReference type="GO" id="GO:0008832">
    <property type="term" value="F:dGTPase activity"/>
    <property type="evidence" value="ECO:0007669"/>
    <property type="project" value="UniProtKB-UniRule"/>
</dbReference>
<dbReference type="GO" id="GO:0000287">
    <property type="term" value="F:magnesium ion binding"/>
    <property type="evidence" value="ECO:0007669"/>
    <property type="project" value="UniProtKB-UniRule"/>
</dbReference>
<dbReference type="GO" id="GO:0006203">
    <property type="term" value="P:dGTP catabolic process"/>
    <property type="evidence" value="ECO:0007669"/>
    <property type="project" value="InterPro"/>
</dbReference>
<dbReference type="CDD" id="cd00077">
    <property type="entry name" value="HDc"/>
    <property type="match status" value="1"/>
</dbReference>
<dbReference type="FunFam" id="1.10.3210.10:FF:000009">
    <property type="entry name" value="Deoxyguanosinetriphosphate triphosphohydrolase"/>
    <property type="match status" value="1"/>
</dbReference>
<dbReference type="FunFam" id="1.10.3210.10:FF:000010">
    <property type="entry name" value="Deoxyguanosinetriphosphate triphosphohydrolase"/>
    <property type="match status" value="1"/>
</dbReference>
<dbReference type="FunFam" id="1.10.3410.10:FF:000001">
    <property type="entry name" value="Deoxyguanosinetriphosphate triphosphohydrolase"/>
    <property type="match status" value="1"/>
</dbReference>
<dbReference type="Gene3D" id="1.10.3210.10">
    <property type="entry name" value="Hypothetical protein af1432"/>
    <property type="match status" value="3"/>
</dbReference>
<dbReference type="Gene3D" id="1.10.3410.10">
    <property type="entry name" value="putative deoxyguanosinetriphosphate triphosphohydrolase like domain"/>
    <property type="match status" value="1"/>
</dbReference>
<dbReference type="HAMAP" id="MF_00030">
    <property type="entry name" value="dGTPase_type1"/>
    <property type="match status" value="1"/>
</dbReference>
<dbReference type="InterPro" id="IPR023293">
    <property type="entry name" value="dGTP_triP_hydro_central_sf"/>
</dbReference>
<dbReference type="InterPro" id="IPR006261">
    <property type="entry name" value="dGTPase"/>
</dbReference>
<dbReference type="InterPro" id="IPR050135">
    <property type="entry name" value="dGTPase-like"/>
</dbReference>
<dbReference type="InterPro" id="IPR020779">
    <property type="entry name" value="dNTPase_1"/>
</dbReference>
<dbReference type="InterPro" id="IPR003607">
    <property type="entry name" value="HD/PDEase_dom"/>
</dbReference>
<dbReference type="InterPro" id="IPR006674">
    <property type="entry name" value="HD_domain"/>
</dbReference>
<dbReference type="InterPro" id="IPR026875">
    <property type="entry name" value="PHydrolase_assoc_dom"/>
</dbReference>
<dbReference type="NCBIfam" id="TIGR01353">
    <property type="entry name" value="dGTP_triPase"/>
    <property type="match status" value="1"/>
</dbReference>
<dbReference type="NCBIfam" id="NF003429">
    <property type="entry name" value="PRK04926.1"/>
    <property type="match status" value="1"/>
</dbReference>
<dbReference type="PANTHER" id="PTHR11373:SF32">
    <property type="entry name" value="DEOXYGUANOSINETRIPHOSPHATE TRIPHOSPHOHYDROLASE"/>
    <property type="match status" value="1"/>
</dbReference>
<dbReference type="PANTHER" id="PTHR11373">
    <property type="entry name" value="DEOXYNUCLEOSIDE TRIPHOSPHATE TRIPHOSPHOHYDROLASE"/>
    <property type="match status" value="1"/>
</dbReference>
<dbReference type="Pfam" id="PF01966">
    <property type="entry name" value="HD"/>
    <property type="match status" value="1"/>
</dbReference>
<dbReference type="Pfam" id="PF13286">
    <property type="entry name" value="HD_assoc"/>
    <property type="match status" value="1"/>
</dbReference>
<dbReference type="SMART" id="SM00471">
    <property type="entry name" value="HDc"/>
    <property type="match status" value="1"/>
</dbReference>
<dbReference type="SUPFAM" id="SSF109604">
    <property type="entry name" value="HD-domain/PDEase-like"/>
    <property type="match status" value="1"/>
</dbReference>
<dbReference type="PROSITE" id="PS51831">
    <property type="entry name" value="HD"/>
    <property type="match status" value="1"/>
</dbReference>
<comment type="function">
    <text evidence="1">dGTPase preferentially hydrolyzes dGTP over the other canonical NTPs.</text>
</comment>
<comment type="catalytic activity">
    <reaction evidence="1">
        <text>dGTP + H2O = 2'-deoxyguanosine + triphosphate + H(+)</text>
        <dbReference type="Rhea" id="RHEA:15193"/>
        <dbReference type="ChEBI" id="CHEBI:15377"/>
        <dbReference type="ChEBI" id="CHEBI:15378"/>
        <dbReference type="ChEBI" id="CHEBI:17172"/>
        <dbReference type="ChEBI" id="CHEBI:18036"/>
        <dbReference type="ChEBI" id="CHEBI:61429"/>
        <dbReference type="EC" id="3.1.5.1"/>
    </reaction>
</comment>
<comment type="cofactor">
    <cofactor evidence="1">
        <name>Mg(2+)</name>
        <dbReference type="ChEBI" id="CHEBI:18420"/>
    </cofactor>
</comment>
<comment type="subunit">
    <text evidence="1">Homotetramer.</text>
</comment>
<comment type="similarity">
    <text evidence="1">Belongs to the dGTPase family. Type 1 subfamily.</text>
</comment>
<sequence length="505" mass="59392">MASIDFRNKINWHRRYRSPQGVKTEHEILRIFESDRGRIINSPAIRRLQQKTQVFPLERNAAVRTRLTHSMEVQQVGRYIAKEILSRLKAQNLLEEYGLDALTGPFESIVEMACLMHDIGNPPFGHFGEAAINDWFRQRLYPEDAESQPLTHDRCVVSSLRLQEGEESLNDIRRKVRQDICYFEGNAQGIRLVHTLMRMNLTWAQVGGILKYTRPAWWRGPVPDSHRYLMKKPGYYLSEEKYIARLRKELQLAPYSRFPLTWIMEAADDISYCVADLEDAVEKRIFSVEQLYHHLYHAWGHHEKDSLFELVVGNAWEKSRANTLSRSTEEQFFMYLRVNTLNKLVPYAAQRFIDNLPQIFAGTFNQALLEDASGFSRLLELYKNVAVEHVFSHPDVEQLELQGYRVISGLLDIYQPLLSMSLNDFSELVEKERLKRFPIESRLFQKLSTRHRLAYVEVVSKLPMDSAEYPVLEYYYRCRLVQDYISGMTDLYAWDEYRRLMAVEQ</sequence>
<keyword id="KW-0378">Hydrolase</keyword>
<keyword id="KW-0460">Magnesium</keyword>
<keyword id="KW-1185">Reference proteome</keyword>
<gene>
    <name evidence="1" type="primary">dgt</name>
    <name type="ordered locus">SARI_02796</name>
</gene>
<feature type="chain" id="PRO_1000074406" description="Deoxyguanosinetriphosphate triphosphohydrolase">
    <location>
        <begin position="1"/>
        <end position="505"/>
    </location>
</feature>
<feature type="domain" description="HD" evidence="2">
    <location>
        <begin position="66"/>
        <end position="273"/>
    </location>
</feature>
<reference key="1">
    <citation type="submission" date="2007-11" db="EMBL/GenBank/DDBJ databases">
        <authorList>
            <consortium name="The Salmonella enterica serovar Arizonae Genome Sequencing Project"/>
            <person name="McClelland M."/>
            <person name="Sanderson E.K."/>
            <person name="Porwollik S."/>
            <person name="Spieth J."/>
            <person name="Clifton W.S."/>
            <person name="Fulton R."/>
            <person name="Chunyan W."/>
            <person name="Wollam A."/>
            <person name="Shah N."/>
            <person name="Pepin K."/>
            <person name="Bhonagiri V."/>
            <person name="Nash W."/>
            <person name="Johnson M."/>
            <person name="Thiruvilangam P."/>
            <person name="Wilson R."/>
        </authorList>
    </citation>
    <scope>NUCLEOTIDE SEQUENCE [LARGE SCALE GENOMIC DNA]</scope>
    <source>
        <strain>ATCC BAA-731 / CDC346-86 / RSK2980</strain>
    </source>
</reference>
<name>DGTP_SALAR</name>
<proteinExistence type="inferred from homology"/>
<accession>A9MPK1</accession>